<comment type="function">
    <text evidence="2">Catalyzes the formation of N(7)-methylguanine at position 46 (m7G46) in tRNA.</text>
</comment>
<comment type="catalytic activity">
    <reaction evidence="2">
        <text>guanosine(46) in tRNA + S-adenosyl-L-methionine = N(7)-methylguanosine(46) in tRNA + S-adenosyl-L-homocysteine</text>
        <dbReference type="Rhea" id="RHEA:42708"/>
        <dbReference type="Rhea" id="RHEA-COMP:10188"/>
        <dbReference type="Rhea" id="RHEA-COMP:10189"/>
        <dbReference type="ChEBI" id="CHEBI:57856"/>
        <dbReference type="ChEBI" id="CHEBI:59789"/>
        <dbReference type="ChEBI" id="CHEBI:74269"/>
        <dbReference type="ChEBI" id="CHEBI:74480"/>
        <dbReference type="EC" id="2.1.1.33"/>
    </reaction>
</comment>
<comment type="pathway">
    <text evidence="2">tRNA modification; N(7)-methylguanine-tRNA biosynthesis.</text>
</comment>
<comment type="similarity">
    <text evidence="2">Belongs to the class I-like SAM-binding methyltransferase superfamily. TrmB family.</text>
</comment>
<protein>
    <recommendedName>
        <fullName evidence="2">tRNA (guanine-N(7)-)-methyltransferase</fullName>
        <ecNumber evidence="2">2.1.1.33</ecNumber>
    </recommendedName>
    <alternativeName>
        <fullName evidence="2">tRNA (guanine(46)-N(7))-methyltransferase</fullName>
    </alternativeName>
    <alternativeName>
        <fullName evidence="2">tRNA(m7G46)-methyltransferase</fullName>
    </alternativeName>
</protein>
<reference key="1">
    <citation type="journal article" date="2000" name="Antimicrob. Agents Chemother.">
        <title>Cloning and nucleotide sequence of the DNA gyrase (gyrA) gene from Mycoplasma hominis and characterization of quinolone-resistant mutants selected In vitro with trovafloxacin.</title>
        <authorList>
            <person name="Bebear C.M."/>
            <person name="Grau O."/>
            <person name="Charron A."/>
            <person name="Renaudin H."/>
            <person name="Gruson D."/>
            <person name="Bebear C."/>
        </authorList>
    </citation>
    <scope>NUCLEOTIDE SEQUENCE [GENOMIC DNA]</scope>
</reference>
<reference key="2">
    <citation type="journal article" date="2009" name="PLoS Genet.">
        <title>Life on arginine for Mycoplasma hominis: clues from its minimal genome and comparison with other human urogenital mycoplasmas.</title>
        <authorList>
            <person name="Pereyre S."/>
            <person name="Sirand-Pugnet P."/>
            <person name="Beven L."/>
            <person name="Charron A."/>
            <person name="Renaudin H."/>
            <person name="Barre A."/>
            <person name="Avenaud P."/>
            <person name="Jacob D."/>
            <person name="Couloux A."/>
            <person name="Barbe V."/>
            <person name="de Daruvar A."/>
            <person name="Blanchard A."/>
            <person name="Bebear C."/>
        </authorList>
    </citation>
    <scope>NUCLEOTIDE SEQUENCE [LARGE SCALE GENOMIC DNA]</scope>
    <source>
        <strain>ATCC 23114 / DSM 25592 / NBRC 14850 / NCTC 10111 / PG21</strain>
    </source>
</reference>
<evidence type="ECO:0000250" key="1"/>
<evidence type="ECO:0000255" key="2">
    <source>
        <dbReference type="HAMAP-Rule" id="MF_01057"/>
    </source>
</evidence>
<feature type="chain" id="PRO_0000171352" description="tRNA (guanine-N(7)-)-methyltransferase">
    <location>
        <begin position="1"/>
        <end position="202"/>
    </location>
</feature>
<feature type="active site" evidence="1">
    <location>
        <position position="107"/>
    </location>
</feature>
<feature type="binding site" evidence="2">
    <location>
        <position position="34"/>
    </location>
    <ligand>
        <name>S-adenosyl-L-methionine</name>
        <dbReference type="ChEBI" id="CHEBI:59789"/>
    </ligand>
</feature>
<feature type="binding site" evidence="2">
    <location>
        <position position="59"/>
    </location>
    <ligand>
        <name>S-adenosyl-L-methionine</name>
        <dbReference type="ChEBI" id="CHEBI:59789"/>
    </ligand>
</feature>
<feature type="binding site" evidence="2">
    <location>
        <position position="86"/>
    </location>
    <ligand>
        <name>S-adenosyl-L-methionine</name>
        <dbReference type="ChEBI" id="CHEBI:59789"/>
    </ligand>
</feature>
<feature type="binding site" evidence="2">
    <location>
        <position position="107"/>
    </location>
    <ligand>
        <name>S-adenosyl-L-methionine</name>
        <dbReference type="ChEBI" id="CHEBI:59789"/>
    </ligand>
</feature>
<feature type="binding site" evidence="2">
    <location>
        <position position="111"/>
    </location>
    <ligand>
        <name>substrate</name>
    </ligand>
</feature>
<feature type="binding site" evidence="2">
    <location>
        <position position="143"/>
    </location>
    <ligand>
        <name>substrate</name>
    </ligand>
</feature>
<feature type="binding site" evidence="2">
    <location>
        <begin position="181"/>
        <end position="184"/>
    </location>
    <ligand>
        <name>substrate</name>
    </ligand>
</feature>
<accession>Q9F411</accession>
<accession>D1J8L3</accession>
<proteinExistence type="inferred from homology"/>
<name>TRMB_METH1</name>
<organism>
    <name type="scientific">Metamycoplasma hominis (strain ATCC 23114 / DSM 25592 / NBRC 14850 / NCTC 10111 / PG21)</name>
    <name type="common">Mycoplasma hominis</name>
    <dbReference type="NCBI Taxonomy" id="347256"/>
    <lineage>
        <taxon>Bacteria</taxon>
        <taxon>Bacillati</taxon>
        <taxon>Mycoplasmatota</taxon>
        <taxon>Mycoplasmoidales</taxon>
        <taxon>Metamycoplasmataceae</taxon>
        <taxon>Metamycoplasma</taxon>
    </lineage>
</organism>
<sequence length="202" mass="23951">MRLRFNKNAETSLMASPMTFKDFPIDNKKNTILEIGMGRGTMLTKLALMHPDIEYIGLEKYSTPAYSALKKAIDLNLENFHIIIGDAINLSTYFKNKIKTIWLTFSDPWPKKRHYKRRLVYRDFLKIYQNVLDKDGVVYFKTDNDMLYQFAIDELKEINAKIIYQTSDLHHCNFKIENVFTDYEEKFNKLNKNINFIAFTFN</sequence>
<dbReference type="EC" id="2.1.1.33" evidence="2"/>
<dbReference type="EMBL" id="U59880">
    <property type="protein sequence ID" value="AAG28841.1"/>
    <property type="molecule type" value="Genomic_DNA"/>
</dbReference>
<dbReference type="EMBL" id="FP236530">
    <property type="protein sequence ID" value="CAX37560.1"/>
    <property type="molecule type" value="Genomic_DNA"/>
</dbReference>
<dbReference type="RefSeq" id="WP_012855699.1">
    <property type="nucleotide sequence ID" value="NC_013511.1"/>
</dbReference>
<dbReference type="SMR" id="Q9F411"/>
<dbReference type="STRING" id="347256.MHO_4250"/>
<dbReference type="PaxDb" id="347256-MHO_4250"/>
<dbReference type="KEGG" id="mho:MHO_4250"/>
<dbReference type="eggNOG" id="COG0220">
    <property type="taxonomic scope" value="Bacteria"/>
</dbReference>
<dbReference type="HOGENOM" id="CLU_050910_2_1_14"/>
<dbReference type="UniPathway" id="UPA00989"/>
<dbReference type="Proteomes" id="UP000002631">
    <property type="component" value="Chromosome"/>
</dbReference>
<dbReference type="GO" id="GO:0043527">
    <property type="term" value="C:tRNA methyltransferase complex"/>
    <property type="evidence" value="ECO:0007669"/>
    <property type="project" value="TreeGrafter"/>
</dbReference>
<dbReference type="GO" id="GO:0008176">
    <property type="term" value="F:tRNA (guanine(46)-N7)-methyltransferase activity"/>
    <property type="evidence" value="ECO:0007669"/>
    <property type="project" value="UniProtKB-UniRule"/>
</dbReference>
<dbReference type="Gene3D" id="3.40.50.150">
    <property type="entry name" value="Vaccinia Virus protein VP39"/>
    <property type="match status" value="1"/>
</dbReference>
<dbReference type="HAMAP" id="MF_01057">
    <property type="entry name" value="tRNA_methyltr_TrmB"/>
    <property type="match status" value="1"/>
</dbReference>
<dbReference type="InterPro" id="IPR029063">
    <property type="entry name" value="SAM-dependent_MTases_sf"/>
</dbReference>
<dbReference type="InterPro" id="IPR003358">
    <property type="entry name" value="tRNA_(Gua-N-7)_MeTrfase_Trmb"/>
</dbReference>
<dbReference type="InterPro" id="IPR055361">
    <property type="entry name" value="tRNA_methyltr_TrmB_bact"/>
</dbReference>
<dbReference type="NCBIfam" id="NF001080">
    <property type="entry name" value="PRK00121.2-2"/>
    <property type="match status" value="1"/>
</dbReference>
<dbReference type="NCBIfam" id="TIGR00091">
    <property type="entry name" value="tRNA (guanosine(46)-N7)-methyltransferase TrmB"/>
    <property type="match status" value="1"/>
</dbReference>
<dbReference type="PANTHER" id="PTHR23417">
    <property type="entry name" value="3-DEOXY-D-MANNO-OCTULOSONIC-ACID TRANSFERASE/TRNA GUANINE-N 7 - -METHYLTRANSFERASE"/>
    <property type="match status" value="1"/>
</dbReference>
<dbReference type="PANTHER" id="PTHR23417:SF14">
    <property type="entry name" value="PENTACOTRIPEPTIDE-REPEAT REGION OF PRORP DOMAIN-CONTAINING PROTEIN"/>
    <property type="match status" value="1"/>
</dbReference>
<dbReference type="Pfam" id="PF02390">
    <property type="entry name" value="Methyltransf_4"/>
    <property type="match status" value="1"/>
</dbReference>
<dbReference type="SUPFAM" id="SSF53335">
    <property type="entry name" value="S-adenosyl-L-methionine-dependent methyltransferases"/>
    <property type="match status" value="1"/>
</dbReference>
<dbReference type="PROSITE" id="PS51625">
    <property type="entry name" value="SAM_MT_TRMB"/>
    <property type="match status" value="1"/>
</dbReference>
<keyword id="KW-0489">Methyltransferase</keyword>
<keyword id="KW-1185">Reference proteome</keyword>
<keyword id="KW-0949">S-adenosyl-L-methionine</keyword>
<keyword id="KW-0808">Transferase</keyword>
<keyword id="KW-0819">tRNA processing</keyword>
<gene>
    <name evidence="2" type="primary">trmB</name>
    <name type="ordered locus">MHO_4250</name>
</gene>